<accession>Q7VTT6</accession>
<protein>
    <recommendedName>
        <fullName evidence="1">Holliday junction branch migration complex subunit RuvB</fullName>
        <ecNumber evidence="1">3.6.4.-</ecNumber>
    </recommendedName>
</protein>
<reference key="1">
    <citation type="journal article" date="2003" name="Nat. Genet.">
        <title>Comparative analysis of the genome sequences of Bordetella pertussis, Bordetella parapertussis and Bordetella bronchiseptica.</title>
        <authorList>
            <person name="Parkhill J."/>
            <person name="Sebaihia M."/>
            <person name="Preston A."/>
            <person name="Murphy L.D."/>
            <person name="Thomson N.R."/>
            <person name="Harris D.E."/>
            <person name="Holden M.T.G."/>
            <person name="Churcher C.M."/>
            <person name="Bentley S.D."/>
            <person name="Mungall K.L."/>
            <person name="Cerdeno-Tarraga A.-M."/>
            <person name="Temple L."/>
            <person name="James K.D."/>
            <person name="Harris B."/>
            <person name="Quail M.A."/>
            <person name="Achtman M."/>
            <person name="Atkin R."/>
            <person name="Baker S."/>
            <person name="Basham D."/>
            <person name="Bason N."/>
            <person name="Cherevach I."/>
            <person name="Chillingworth T."/>
            <person name="Collins M."/>
            <person name="Cronin A."/>
            <person name="Davis P."/>
            <person name="Doggett J."/>
            <person name="Feltwell T."/>
            <person name="Goble A."/>
            <person name="Hamlin N."/>
            <person name="Hauser H."/>
            <person name="Holroyd S."/>
            <person name="Jagels K."/>
            <person name="Leather S."/>
            <person name="Moule S."/>
            <person name="Norberczak H."/>
            <person name="O'Neil S."/>
            <person name="Ormond D."/>
            <person name="Price C."/>
            <person name="Rabbinowitsch E."/>
            <person name="Rutter S."/>
            <person name="Sanders M."/>
            <person name="Saunders D."/>
            <person name="Seeger K."/>
            <person name="Sharp S."/>
            <person name="Simmonds M."/>
            <person name="Skelton J."/>
            <person name="Squares R."/>
            <person name="Squares S."/>
            <person name="Stevens K."/>
            <person name="Unwin L."/>
            <person name="Whitehead S."/>
            <person name="Barrell B.G."/>
            <person name="Maskell D.J."/>
        </authorList>
    </citation>
    <scope>NUCLEOTIDE SEQUENCE [LARGE SCALE GENOMIC DNA]</scope>
    <source>
        <strain>Tohama I / ATCC BAA-589 / NCTC 13251</strain>
    </source>
</reference>
<feature type="chain" id="PRO_0000165503" description="Holliday junction branch migration complex subunit RuvB">
    <location>
        <begin position="1"/>
        <end position="357"/>
    </location>
</feature>
<feature type="region of interest" description="Disordered" evidence="2">
    <location>
        <begin position="1"/>
        <end position="30"/>
    </location>
</feature>
<feature type="region of interest" description="Large ATPase domain (RuvB-L)" evidence="1">
    <location>
        <begin position="13"/>
        <end position="195"/>
    </location>
</feature>
<feature type="region of interest" description="Small ATPAse domain (RuvB-S)" evidence="1">
    <location>
        <begin position="196"/>
        <end position="266"/>
    </location>
</feature>
<feature type="region of interest" description="Head domain (RuvB-H)" evidence="1">
    <location>
        <begin position="269"/>
        <end position="357"/>
    </location>
</feature>
<feature type="compositionally biased region" description="Low complexity" evidence="2">
    <location>
        <begin position="1"/>
        <end position="15"/>
    </location>
</feature>
<feature type="binding site" evidence="1">
    <location>
        <position position="34"/>
    </location>
    <ligand>
        <name>ATP</name>
        <dbReference type="ChEBI" id="CHEBI:30616"/>
    </ligand>
</feature>
<feature type="binding site" evidence="1">
    <location>
        <position position="35"/>
    </location>
    <ligand>
        <name>ATP</name>
        <dbReference type="ChEBI" id="CHEBI:30616"/>
    </ligand>
</feature>
<feature type="binding site" evidence="1">
    <location>
        <position position="76"/>
    </location>
    <ligand>
        <name>ATP</name>
        <dbReference type="ChEBI" id="CHEBI:30616"/>
    </ligand>
</feature>
<feature type="binding site" evidence="1">
    <location>
        <position position="79"/>
    </location>
    <ligand>
        <name>ATP</name>
        <dbReference type="ChEBI" id="CHEBI:30616"/>
    </ligand>
</feature>
<feature type="binding site" evidence="1">
    <location>
        <position position="80"/>
    </location>
    <ligand>
        <name>ATP</name>
        <dbReference type="ChEBI" id="CHEBI:30616"/>
    </ligand>
</feature>
<feature type="binding site" evidence="1">
    <location>
        <position position="80"/>
    </location>
    <ligand>
        <name>Mg(2+)</name>
        <dbReference type="ChEBI" id="CHEBI:18420"/>
    </ligand>
</feature>
<feature type="binding site" evidence="1">
    <location>
        <position position="81"/>
    </location>
    <ligand>
        <name>ATP</name>
        <dbReference type="ChEBI" id="CHEBI:30616"/>
    </ligand>
</feature>
<feature type="binding site" evidence="1">
    <location>
        <begin position="142"/>
        <end position="144"/>
    </location>
    <ligand>
        <name>ATP</name>
        <dbReference type="ChEBI" id="CHEBI:30616"/>
    </ligand>
</feature>
<feature type="binding site" evidence="1">
    <location>
        <position position="185"/>
    </location>
    <ligand>
        <name>ATP</name>
        <dbReference type="ChEBI" id="CHEBI:30616"/>
    </ligand>
</feature>
<feature type="binding site" evidence="1">
    <location>
        <position position="195"/>
    </location>
    <ligand>
        <name>ATP</name>
        <dbReference type="ChEBI" id="CHEBI:30616"/>
    </ligand>
</feature>
<feature type="binding site" evidence="1">
    <location>
        <position position="232"/>
    </location>
    <ligand>
        <name>ATP</name>
        <dbReference type="ChEBI" id="CHEBI:30616"/>
    </ligand>
</feature>
<feature type="binding site" evidence="1">
    <location>
        <position position="305"/>
    </location>
    <ligand>
        <name>DNA</name>
        <dbReference type="ChEBI" id="CHEBI:16991"/>
    </ligand>
</feature>
<feature type="binding site" evidence="1">
    <location>
        <position position="324"/>
    </location>
    <ligand>
        <name>DNA</name>
        <dbReference type="ChEBI" id="CHEBI:16991"/>
    </ligand>
</feature>
<feature type="binding site" evidence="1">
    <location>
        <position position="329"/>
    </location>
    <ligand>
        <name>DNA</name>
        <dbReference type="ChEBI" id="CHEBI:16991"/>
    </ligand>
</feature>
<name>RUVB_BORPE</name>
<gene>
    <name evidence="1" type="primary">ruvB</name>
    <name type="ordered locus">BP3421</name>
</gene>
<proteinExistence type="inferred from homology"/>
<dbReference type="EC" id="3.6.4.-" evidence="1"/>
<dbReference type="EMBL" id="BX640421">
    <property type="protein sequence ID" value="CAE43684.1"/>
    <property type="molecule type" value="Genomic_DNA"/>
</dbReference>
<dbReference type="RefSeq" id="NP_881948.1">
    <property type="nucleotide sequence ID" value="NC_002929.2"/>
</dbReference>
<dbReference type="RefSeq" id="WP_010931466.1">
    <property type="nucleotide sequence ID" value="NZ_CP039022.1"/>
</dbReference>
<dbReference type="SMR" id="Q7VTT6"/>
<dbReference type="STRING" id="257313.BP3421"/>
<dbReference type="PaxDb" id="257313-BP3421"/>
<dbReference type="GeneID" id="69600595"/>
<dbReference type="KEGG" id="bpe:BP3421"/>
<dbReference type="PATRIC" id="fig|257313.5.peg.3705"/>
<dbReference type="eggNOG" id="COG2255">
    <property type="taxonomic scope" value="Bacteria"/>
</dbReference>
<dbReference type="HOGENOM" id="CLU_055599_1_0_4"/>
<dbReference type="Proteomes" id="UP000002676">
    <property type="component" value="Chromosome"/>
</dbReference>
<dbReference type="GO" id="GO:0005737">
    <property type="term" value="C:cytoplasm"/>
    <property type="evidence" value="ECO:0007669"/>
    <property type="project" value="UniProtKB-SubCell"/>
</dbReference>
<dbReference type="GO" id="GO:0048476">
    <property type="term" value="C:Holliday junction resolvase complex"/>
    <property type="evidence" value="ECO:0007669"/>
    <property type="project" value="UniProtKB-UniRule"/>
</dbReference>
<dbReference type="GO" id="GO:0005524">
    <property type="term" value="F:ATP binding"/>
    <property type="evidence" value="ECO:0007669"/>
    <property type="project" value="UniProtKB-UniRule"/>
</dbReference>
<dbReference type="GO" id="GO:0016887">
    <property type="term" value="F:ATP hydrolysis activity"/>
    <property type="evidence" value="ECO:0007669"/>
    <property type="project" value="InterPro"/>
</dbReference>
<dbReference type="GO" id="GO:0000400">
    <property type="term" value="F:four-way junction DNA binding"/>
    <property type="evidence" value="ECO:0007669"/>
    <property type="project" value="UniProtKB-UniRule"/>
</dbReference>
<dbReference type="GO" id="GO:0009378">
    <property type="term" value="F:four-way junction helicase activity"/>
    <property type="evidence" value="ECO:0007669"/>
    <property type="project" value="InterPro"/>
</dbReference>
<dbReference type="GO" id="GO:0006310">
    <property type="term" value="P:DNA recombination"/>
    <property type="evidence" value="ECO:0007669"/>
    <property type="project" value="UniProtKB-UniRule"/>
</dbReference>
<dbReference type="GO" id="GO:0006281">
    <property type="term" value="P:DNA repair"/>
    <property type="evidence" value="ECO:0007669"/>
    <property type="project" value="UniProtKB-UniRule"/>
</dbReference>
<dbReference type="CDD" id="cd00009">
    <property type="entry name" value="AAA"/>
    <property type="match status" value="1"/>
</dbReference>
<dbReference type="FunFam" id="1.10.10.10:FF:000086">
    <property type="entry name" value="Holliday junction ATP-dependent DNA helicase RuvB"/>
    <property type="match status" value="1"/>
</dbReference>
<dbReference type="FunFam" id="3.40.50.300:FF:000073">
    <property type="entry name" value="Holliday junction ATP-dependent DNA helicase RuvB"/>
    <property type="match status" value="1"/>
</dbReference>
<dbReference type="Gene3D" id="1.10.8.60">
    <property type="match status" value="1"/>
</dbReference>
<dbReference type="Gene3D" id="3.40.50.300">
    <property type="entry name" value="P-loop containing nucleotide triphosphate hydrolases"/>
    <property type="match status" value="1"/>
</dbReference>
<dbReference type="Gene3D" id="1.10.10.10">
    <property type="entry name" value="Winged helix-like DNA-binding domain superfamily/Winged helix DNA-binding domain"/>
    <property type="match status" value="1"/>
</dbReference>
<dbReference type="HAMAP" id="MF_00016">
    <property type="entry name" value="DNA_HJ_migration_RuvB"/>
    <property type="match status" value="1"/>
</dbReference>
<dbReference type="InterPro" id="IPR003593">
    <property type="entry name" value="AAA+_ATPase"/>
</dbReference>
<dbReference type="InterPro" id="IPR041445">
    <property type="entry name" value="AAA_lid_4"/>
</dbReference>
<dbReference type="InterPro" id="IPR004605">
    <property type="entry name" value="DNA_helicase_Holl-junc_RuvB"/>
</dbReference>
<dbReference type="InterPro" id="IPR027417">
    <property type="entry name" value="P-loop_NTPase"/>
</dbReference>
<dbReference type="InterPro" id="IPR008824">
    <property type="entry name" value="RuvB-like_N"/>
</dbReference>
<dbReference type="InterPro" id="IPR008823">
    <property type="entry name" value="RuvB_C"/>
</dbReference>
<dbReference type="InterPro" id="IPR036388">
    <property type="entry name" value="WH-like_DNA-bd_sf"/>
</dbReference>
<dbReference type="InterPro" id="IPR036390">
    <property type="entry name" value="WH_DNA-bd_sf"/>
</dbReference>
<dbReference type="NCBIfam" id="NF000868">
    <property type="entry name" value="PRK00080.1"/>
    <property type="match status" value="1"/>
</dbReference>
<dbReference type="NCBIfam" id="TIGR00635">
    <property type="entry name" value="ruvB"/>
    <property type="match status" value="1"/>
</dbReference>
<dbReference type="PANTHER" id="PTHR42848">
    <property type="match status" value="1"/>
</dbReference>
<dbReference type="PANTHER" id="PTHR42848:SF1">
    <property type="entry name" value="HOLLIDAY JUNCTION BRANCH MIGRATION COMPLEX SUBUNIT RUVB"/>
    <property type="match status" value="1"/>
</dbReference>
<dbReference type="Pfam" id="PF17864">
    <property type="entry name" value="AAA_lid_4"/>
    <property type="match status" value="1"/>
</dbReference>
<dbReference type="Pfam" id="PF05491">
    <property type="entry name" value="RuvB_C"/>
    <property type="match status" value="1"/>
</dbReference>
<dbReference type="Pfam" id="PF05496">
    <property type="entry name" value="RuvB_N"/>
    <property type="match status" value="1"/>
</dbReference>
<dbReference type="SMART" id="SM00382">
    <property type="entry name" value="AAA"/>
    <property type="match status" value="1"/>
</dbReference>
<dbReference type="SUPFAM" id="SSF52540">
    <property type="entry name" value="P-loop containing nucleoside triphosphate hydrolases"/>
    <property type="match status" value="1"/>
</dbReference>
<dbReference type="SUPFAM" id="SSF46785">
    <property type="entry name" value="Winged helix' DNA-binding domain"/>
    <property type="match status" value="1"/>
</dbReference>
<keyword id="KW-0067">ATP-binding</keyword>
<keyword id="KW-0963">Cytoplasm</keyword>
<keyword id="KW-0227">DNA damage</keyword>
<keyword id="KW-0233">DNA recombination</keyword>
<keyword id="KW-0234">DNA repair</keyword>
<keyword id="KW-0238">DNA-binding</keyword>
<keyword id="KW-0378">Hydrolase</keyword>
<keyword id="KW-0547">Nucleotide-binding</keyword>
<keyword id="KW-1185">Reference proteome</keyword>
<comment type="function">
    <text evidence="1">The RuvA-RuvB-RuvC complex processes Holliday junction (HJ) DNA during genetic recombination and DNA repair, while the RuvA-RuvB complex plays an important role in the rescue of blocked DNA replication forks via replication fork reversal (RFR). RuvA specifically binds to HJ cruciform DNA, conferring on it an open structure. The RuvB hexamer acts as an ATP-dependent pump, pulling dsDNA into and through the RuvAB complex. RuvB forms 2 homohexamers on either side of HJ DNA bound by 1 or 2 RuvA tetramers; 4 subunits per hexamer contact DNA at a time. Coordinated motions by a converter formed by DNA-disengaged RuvB subunits stimulates ATP hydrolysis and nucleotide exchange. Immobilization of the converter enables RuvB to convert the ATP-contained energy into a lever motion, pulling 2 nucleotides of DNA out of the RuvA tetramer per ATP hydrolyzed, thus driving DNA branch migration. The RuvB motors rotate together with the DNA substrate, which together with the progressing nucleotide cycle form the mechanistic basis for DNA recombination by continuous HJ branch migration. Branch migration allows RuvC to scan DNA until it finds its consensus sequence, where it cleaves and resolves cruciform DNA.</text>
</comment>
<comment type="catalytic activity">
    <reaction evidence="1">
        <text>ATP + H2O = ADP + phosphate + H(+)</text>
        <dbReference type="Rhea" id="RHEA:13065"/>
        <dbReference type="ChEBI" id="CHEBI:15377"/>
        <dbReference type="ChEBI" id="CHEBI:15378"/>
        <dbReference type="ChEBI" id="CHEBI:30616"/>
        <dbReference type="ChEBI" id="CHEBI:43474"/>
        <dbReference type="ChEBI" id="CHEBI:456216"/>
    </reaction>
</comment>
<comment type="subunit">
    <text evidence="1">Homohexamer. Forms an RuvA(8)-RuvB(12)-Holliday junction (HJ) complex. HJ DNA is sandwiched between 2 RuvA tetramers; dsDNA enters through RuvA and exits via RuvB. An RuvB hexamer assembles on each DNA strand where it exits the tetramer. Each RuvB hexamer is contacted by two RuvA subunits (via domain III) on 2 adjacent RuvB subunits; this complex drives branch migration. In the full resolvosome a probable DNA-RuvA(4)-RuvB(12)-RuvC(2) complex forms which resolves the HJ.</text>
</comment>
<comment type="subcellular location">
    <subcellularLocation>
        <location evidence="1">Cytoplasm</location>
    </subcellularLocation>
</comment>
<comment type="domain">
    <text evidence="1">Has 3 domains, the large (RuvB-L) and small ATPase (RuvB-S) domains and the C-terminal head (RuvB-H) domain. The head domain binds DNA, while the ATPase domains jointly bind ATP, ADP or are empty depending on the state of the subunit in the translocation cycle. During a single DNA translocation step the structure of each domain remains the same, but their relative positions change.</text>
</comment>
<comment type="similarity">
    <text evidence="1">Belongs to the RuvB family.</text>
</comment>
<organism>
    <name type="scientific">Bordetella pertussis (strain Tohama I / ATCC BAA-589 / NCTC 13251)</name>
    <dbReference type="NCBI Taxonomy" id="257313"/>
    <lineage>
        <taxon>Bacteria</taxon>
        <taxon>Pseudomonadati</taxon>
        <taxon>Pseudomonadota</taxon>
        <taxon>Betaproteobacteria</taxon>
        <taxon>Burkholderiales</taxon>
        <taxon>Alcaligenaceae</taxon>
        <taxon>Bordetella</taxon>
    </lineage>
</organism>
<sequence length="357" mass="39047">MAIQSDSLSSLPDSPRIVAPQPVSPNEESIERALRPKALEEYVGQQRAREQLEIFIAAARKRGEALDHVLLFGPPGLGKTTLAHIIAHEMGVQLRQTSGPVLERPGDLAALLTNLERNDVLFIDEIHRLSPVVEEILYPALEDFQIDILIGEGPAARSVKLDLQPFTLVGATTRAGMLTNPLRDRFGIVSRLEFYNTDELARIVTRSASLLNADITADGAHEVARRSRGTPRIANRLLRRVRDYAQVKSHGVIDQDAAGRALAMLDVDPQGLDVMDRKLLEAIVHKFDGGPVGVDSLAAAIGEERDTIEDVIEPYLIQHGYLQRTPRGRTATLTTWRHLGLTPPAAASGGTGELFSK</sequence>
<evidence type="ECO:0000255" key="1">
    <source>
        <dbReference type="HAMAP-Rule" id="MF_00016"/>
    </source>
</evidence>
<evidence type="ECO:0000256" key="2">
    <source>
        <dbReference type="SAM" id="MobiDB-lite"/>
    </source>
</evidence>